<protein>
    <recommendedName>
        <fullName evidence="1">Small ribosomal subunit protein uS10</fullName>
    </recommendedName>
    <alternativeName>
        <fullName evidence="2">30S ribosomal protein S10</fullName>
    </alternativeName>
</protein>
<keyword id="KW-1185">Reference proteome</keyword>
<keyword id="KW-0687">Ribonucleoprotein</keyword>
<keyword id="KW-0689">Ribosomal protein</keyword>
<name>RS10_THEAC</name>
<dbReference type="EMBL" id="X63903">
    <property type="protein sequence ID" value="CAA45361.1"/>
    <property type="molecule type" value="Genomic_DNA"/>
</dbReference>
<dbReference type="EMBL" id="AL445064">
    <property type="protein sequence ID" value="CAC11587.1"/>
    <property type="molecule type" value="Genomic_DNA"/>
</dbReference>
<dbReference type="PIR" id="S26288">
    <property type="entry name" value="S26288"/>
</dbReference>
<dbReference type="SMR" id="P28079"/>
<dbReference type="FunCoup" id="P28079">
    <property type="interactions" value="161"/>
</dbReference>
<dbReference type="STRING" id="273075.gene:9571665"/>
<dbReference type="PaxDb" id="273075-Ta0445"/>
<dbReference type="EnsemblBacteria" id="CAC11587">
    <property type="protein sequence ID" value="CAC11587"/>
    <property type="gene ID" value="CAC11587"/>
</dbReference>
<dbReference type="KEGG" id="tac:Ta0445"/>
<dbReference type="eggNOG" id="arCOG01758">
    <property type="taxonomic scope" value="Archaea"/>
</dbReference>
<dbReference type="HOGENOM" id="CLU_122625_0_1_2"/>
<dbReference type="InParanoid" id="P28079"/>
<dbReference type="OrthoDB" id="371736at2157"/>
<dbReference type="Proteomes" id="UP000001024">
    <property type="component" value="Chromosome"/>
</dbReference>
<dbReference type="GO" id="GO:0015935">
    <property type="term" value="C:small ribosomal subunit"/>
    <property type="evidence" value="ECO:0007669"/>
    <property type="project" value="InterPro"/>
</dbReference>
<dbReference type="GO" id="GO:0003735">
    <property type="term" value="F:structural constituent of ribosome"/>
    <property type="evidence" value="ECO:0007669"/>
    <property type="project" value="InterPro"/>
</dbReference>
<dbReference type="GO" id="GO:0000049">
    <property type="term" value="F:tRNA binding"/>
    <property type="evidence" value="ECO:0007669"/>
    <property type="project" value="UniProtKB-UniRule"/>
</dbReference>
<dbReference type="GO" id="GO:0006412">
    <property type="term" value="P:translation"/>
    <property type="evidence" value="ECO:0007669"/>
    <property type="project" value="UniProtKB-UniRule"/>
</dbReference>
<dbReference type="FunFam" id="3.30.70.600:FF:000004">
    <property type="entry name" value="30S ribosomal protein S10"/>
    <property type="match status" value="1"/>
</dbReference>
<dbReference type="Gene3D" id="3.30.70.600">
    <property type="entry name" value="Ribosomal protein S10 domain"/>
    <property type="match status" value="1"/>
</dbReference>
<dbReference type="HAMAP" id="MF_00508">
    <property type="entry name" value="Ribosomal_uS10"/>
    <property type="match status" value="1"/>
</dbReference>
<dbReference type="InterPro" id="IPR001848">
    <property type="entry name" value="Ribosomal_uS10"/>
</dbReference>
<dbReference type="InterPro" id="IPR018268">
    <property type="entry name" value="Ribosomal_uS10_CS"/>
</dbReference>
<dbReference type="InterPro" id="IPR027486">
    <property type="entry name" value="Ribosomal_uS10_dom"/>
</dbReference>
<dbReference type="InterPro" id="IPR036838">
    <property type="entry name" value="Ribosomal_uS10_dom_sf"/>
</dbReference>
<dbReference type="InterPro" id="IPR005729">
    <property type="entry name" value="Ribosomal_uS10_euk/arc"/>
</dbReference>
<dbReference type="NCBIfam" id="TIGR01049">
    <property type="entry name" value="rpsJ_bact"/>
    <property type="match status" value="1"/>
</dbReference>
<dbReference type="NCBIfam" id="TIGR01046">
    <property type="entry name" value="uS10_euk_arch"/>
    <property type="match status" value="1"/>
</dbReference>
<dbReference type="PANTHER" id="PTHR11700">
    <property type="entry name" value="30S RIBOSOMAL PROTEIN S10 FAMILY MEMBER"/>
    <property type="match status" value="1"/>
</dbReference>
<dbReference type="Pfam" id="PF00338">
    <property type="entry name" value="Ribosomal_S10"/>
    <property type="match status" value="1"/>
</dbReference>
<dbReference type="PRINTS" id="PR00971">
    <property type="entry name" value="RIBOSOMALS10"/>
</dbReference>
<dbReference type="SMART" id="SM01403">
    <property type="entry name" value="Ribosomal_S10"/>
    <property type="match status" value="1"/>
</dbReference>
<dbReference type="SUPFAM" id="SSF54999">
    <property type="entry name" value="Ribosomal protein S10"/>
    <property type="match status" value="1"/>
</dbReference>
<dbReference type="PROSITE" id="PS00361">
    <property type="entry name" value="RIBOSOMAL_S10"/>
    <property type="match status" value="1"/>
</dbReference>
<proteinExistence type="inferred from homology"/>
<organism>
    <name type="scientific">Thermoplasma acidophilum (strain ATCC 25905 / DSM 1728 / JCM 9062 / NBRC 15155 / AMRC-C165)</name>
    <dbReference type="NCBI Taxonomy" id="273075"/>
    <lineage>
        <taxon>Archaea</taxon>
        <taxon>Methanobacteriati</taxon>
        <taxon>Thermoplasmatota</taxon>
        <taxon>Thermoplasmata</taxon>
        <taxon>Thermoplasmatales</taxon>
        <taxon>Thermoplasmataceae</taxon>
        <taxon>Thermoplasma</taxon>
    </lineage>
</organism>
<gene>
    <name evidence="1" type="primary">rps10</name>
    <name type="ordered locus">Ta0445</name>
</gene>
<accession>P28079</accession>
<comment type="function">
    <text evidence="1">Involved in the binding of tRNA to the ribosomes.</text>
</comment>
<comment type="subunit">
    <text evidence="1">Part of the 30S ribosomal subunit.</text>
</comment>
<comment type="similarity">
    <text evidence="1">Belongs to the universal ribosomal protein uS10 family.</text>
</comment>
<feature type="chain" id="PRO_0000146662" description="Small ribosomal subunit protein uS10">
    <location>
        <begin position="1"/>
        <end position="104"/>
    </location>
</feature>
<sequence length="104" mass="11948">MVSYKARISLSGTEHRVVDRVCNEIKEIASRTGVEIHGPMPLPTKRLVVPVRKSPDGEGTNTWDHWEMRIHKRLIDVDADERTLRQLMRIPIPDGVQIEIQIKS</sequence>
<reference key="1">
    <citation type="journal article" date="1992" name="Nucleic Acids Res.">
        <title>Nucleotide sequence of the gene coding for ribosomal protein S10 from the archaeum Thermoplasma acidophilum.</title>
        <authorList>
            <person name="Tesch A."/>
            <person name="Klink F."/>
        </authorList>
    </citation>
    <scope>NUCLEOTIDE SEQUENCE [GENOMIC DNA]</scope>
    <source>
        <strain>ATCC 25905 / DSM 1728 / JCM 9062 / NBRC 15155 / AMRC-C165</strain>
    </source>
</reference>
<reference key="2">
    <citation type="journal article" date="2000" name="Nature">
        <title>The genome sequence of the thermoacidophilic scavenger Thermoplasma acidophilum.</title>
        <authorList>
            <person name="Ruepp A."/>
            <person name="Graml W."/>
            <person name="Santos-Martinez M.-L."/>
            <person name="Koretke K.K."/>
            <person name="Volker C."/>
            <person name="Mewes H.-W."/>
            <person name="Frishman D."/>
            <person name="Stocker S."/>
            <person name="Lupas A.N."/>
            <person name="Baumeister W."/>
        </authorList>
    </citation>
    <scope>NUCLEOTIDE SEQUENCE [LARGE SCALE GENOMIC DNA]</scope>
    <source>
        <strain>ATCC 25905 / DSM 1728 / JCM 9062 / NBRC 15155 / AMRC-C165</strain>
    </source>
</reference>
<evidence type="ECO:0000255" key="1">
    <source>
        <dbReference type="HAMAP-Rule" id="MF_00508"/>
    </source>
</evidence>
<evidence type="ECO:0000305" key="2"/>